<dbReference type="EC" id="2.1.1.222" evidence="1"/>
<dbReference type="EC" id="2.1.1.64" evidence="1"/>
<dbReference type="EMBL" id="AE017197">
    <property type="protein sequence ID" value="AAU04077.1"/>
    <property type="molecule type" value="Genomic_DNA"/>
</dbReference>
<dbReference type="RefSeq" id="WP_011191057.1">
    <property type="nucleotide sequence ID" value="NC_006142.1"/>
</dbReference>
<dbReference type="SMR" id="Q68WB5"/>
<dbReference type="KEGG" id="rty:RT0613"/>
<dbReference type="eggNOG" id="COG2227">
    <property type="taxonomic scope" value="Bacteria"/>
</dbReference>
<dbReference type="HOGENOM" id="CLU_042432_0_0_5"/>
<dbReference type="OrthoDB" id="9801538at2"/>
<dbReference type="UniPathway" id="UPA00232"/>
<dbReference type="Proteomes" id="UP000000604">
    <property type="component" value="Chromosome"/>
</dbReference>
<dbReference type="GO" id="GO:0102208">
    <property type="term" value="F:2-polyprenyl-6-hydroxyphenol methylase activity"/>
    <property type="evidence" value="ECO:0007669"/>
    <property type="project" value="UniProtKB-EC"/>
</dbReference>
<dbReference type="GO" id="GO:0061542">
    <property type="term" value="F:3-demethylubiquinol 3-O-methyltransferase activity"/>
    <property type="evidence" value="ECO:0007669"/>
    <property type="project" value="UniProtKB-UniRule"/>
</dbReference>
<dbReference type="GO" id="GO:0010420">
    <property type="term" value="F:polyprenyldihydroxybenzoate methyltransferase activity"/>
    <property type="evidence" value="ECO:0007669"/>
    <property type="project" value="InterPro"/>
</dbReference>
<dbReference type="GO" id="GO:0032259">
    <property type="term" value="P:methylation"/>
    <property type="evidence" value="ECO:0007669"/>
    <property type="project" value="UniProtKB-KW"/>
</dbReference>
<dbReference type="CDD" id="cd02440">
    <property type="entry name" value="AdoMet_MTases"/>
    <property type="match status" value="1"/>
</dbReference>
<dbReference type="Gene3D" id="3.40.50.150">
    <property type="entry name" value="Vaccinia Virus protein VP39"/>
    <property type="match status" value="1"/>
</dbReference>
<dbReference type="HAMAP" id="MF_00472">
    <property type="entry name" value="UbiG"/>
    <property type="match status" value="1"/>
</dbReference>
<dbReference type="InterPro" id="IPR029063">
    <property type="entry name" value="SAM-dependent_MTases_sf"/>
</dbReference>
<dbReference type="InterPro" id="IPR010233">
    <property type="entry name" value="UbiG_MeTrfase"/>
</dbReference>
<dbReference type="NCBIfam" id="TIGR01983">
    <property type="entry name" value="UbiG"/>
    <property type="match status" value="1"/>
</dbReference>
<dbReference type="PANTHER" id="PTHR43464">
    <property type="entry name" value="METHYLTRANSFERASE"/>
    <property type="match status" value="1"/>
</dbReference>
<dbReference type="PANTHER" id="PTHR43464:SF19">
    <property type="entry name" value="UBIQUINONE BIOSYNTHESIS O-METHYLTRANSFERASE, MITOCHONDRIAL"/>
    <property type="match status" value="1"/>
</dbReference>
<dbReference type="Pfam" id="PF13489">
    <property type="entry name" value="Methyltransf_23"/>
    <property type="match status" value="1"/>
</dbReference>
<dbReference type="SUPFAM" id="SSF53335">
    <property type="entry name" value="S-adenosyl-L-methionine-dependent methyltransferases"/>
    <property type="match status" value="1"/>
</dbReference>
<keyword id="KW-0489">Methyltransferase</keyword>
<keyword id="KW-0949">S-adenosyl-L-methionine</keyword>
<keyword id="KW-0808">Transferase</keyword>
<keyword id="KW-0831">Ubiquinone biosynthesis</keyword>
<reference key="1">
    <citation type="journal article" date="2004" name="J. Bacteriol.">
        <title>Complete genome sequence of Rickettsia typhi and comparison with sequences of other Rickettsiae.</title>
        <authorList>
            <person name="McLeod M.P."/>
            <person name="Qin X."/>
            <person name="Karpathy S.E."/>
            <person name="Gioia J."/>
            <person name="Highlander S.K."/>
            <person name="Fox G.E."/>
            <person name="McNeill T.Z."/>
            <person name="Jiang H."/>
            <person name="Muzny D."/>
            <person name="Jacob L.S."/>
            <person name="Hawes A.C."/>
            <person name="Sodergren E."/>
            <person name="Gill R."/>
            <person name="Hume J."/>
            <person name="Morgan M."/>
            <person name="Fan G."/>
            <person name="Amin A.G."/>
            <person name="Gibbs R.A."/>
            <person name="Hong C."/>
            <person name="Yu X.-J."/>
            <person name="Walker D.H."/>
            <person name="Weinstock G.M."/>
        </authorList>
    </citation>
    <scope>NUCLEOTIDE SEQUENCE [LARGE SCALE GENOMIC DNA]</scope>
    <source>
        <strain>ATCC VR-144 / Wilmington</strain>
    </source>
</reference>
<organism>
    <name type="scientific">Rickettsia typhi (strain ATCC VR-144 / Wilmington)</name>
    <dbReference type="NCBI Taxonomy" id="257363"/>
    <lineage>
        <taxon>Bacteria</taxon>
        <taxon>Pseudomonadati</taxon>
        <taxon>Pseudomonadota</taxon>
        <taxon>Alphaproteobacteria</taxon>
        <taxon>Rickettsiales</taxon>
        <taxon>Rickettsiaceae</taxon>
        <taxon>Rickettsieae</taxon>
        <taxon>Rickettsia</taxon>
        <taxon>typhus group</taxon>
    </lineage>
</organism>
<gene>
    <name evidence="1" type="primary">ubiG</name>
    <name type="ordered locus">RT0613</name>
</gene>
<evidence type="ECO:0000255" key="1">
    <source>
        <dbReference type="HAMAP-Rule" id="MF_00472"/>
    </source>
</evidence>
<feature type="chain" id="PRO_0000193400" description="Ubiquinone biosynthesis O-methyltransferase">
    <location>
        <begin position="1"/>
        <end position="246"/>
    </location>
</feature>
<feature type="binding site" evidence="1">
    <location>
        <position position="36"/>
    </location>
    <ligand>
        <name>S-adenosyl-L-methionine</name>
        <dbReference type="ChEBI" id="CHEBI:59789"/>
    </ligand>
</feature>
<feature type="binding site" evidence="1">
    <location>
        <position position="60"/>
    </location>
    <ligand>
        <name>S-adenosyl-L-methionine</name>
        <dbReference type="ChEBI" id="CHEBI:59789"/>
    </ligand>
</feature>
<feature type="binding site" evidence="1">
    <location>
        <position position="81"/>
    </location>
    <ligand>
        <name>S-adenosyl-L-methionine</name>
        <dbReference type="ChEBI" id="CHEBI:59789"/>
    </ligand>
</feature>
<feature type="binding site" evidence="1">
    <location>
        <position position="123"/>
    </location>
    <ligand>
        <name>S-adenosyl-L-methionine</name>
        <dbReference type="ChEBI" id="CHEBI:59789"/>
    </ligand>
</feature>
<accession>Q68WB5</accession>
<comment type="function">
    <text evidence="1">O-methyltransferase that catalyzes the 2 O-methylation steps in the ubiquinone biosynthetic pathway.</text>
</comment>
<comment type="catalytic activity">
    <reaction evidence="1">
        <text>a 3-demethylubiquinol + S-adenosyl-L-methionine = a ubiquinol + S-adenosyl-L-homocysteine + H(+)</text>
        <dbReference type="Rhea" id="RHEA:44380"/>
        <dbReference type="Rhea" id="RHEA-COMP:9566"/>
        <dbReference type="Rhea" id="RHEA-COMP:10914"/>
        <dbReference type="ChEBI" id="CHEBI:15378"/>
        <dbReference type="ChEBI" id="CHEBI:17976"/>
        <dbReference type="ChEBI" id="CHEBI:57856"/>
        <dbReference type="ChEBI" id="CHEBI:59789"/>
        <dbReference type="ChEBI" id="CHEBI:84422"/>
        <dbReference type="EC" id="2.1.1.64"/>
    </reaction>
</comment>
<comment type="catalytic activity">
    <reaction evidence="1">
        <text>a 3-(all-trans-polyprenyl)benzene-1,2-diol + S-adenosyl-L-methionine = a 2-methoxy-6-(all-trans-polyprenyl)phenol + S-adenosyl-L-homocysteine + H(+)</text>
        <dbReference type="Rhea" id="RHEA:31411"/>
        <dbReference type="Rhea" id="RHEA-COMP:9550"/>
        <dbReference type="Rhea" id="RHEA-COMP:9551"/>
        <dbReference type="ChEBI" id="CHEBI:15378"/>
        <dbReference type="ChEBI" id="CHEBI:57856"/>
        <dbReference type="ChEBI" id="CHEBI:59789"/>
        <dbReference type="ChEBI" id="CHEBI:62729"/>
        <dbReference type="ChEBI" id="CHEBI:62731"/>
        <dbReference type="EC" id="2.1.1.222"/>
    </reaction>
</comment>
<comment type="pathway">
    <text evidence="1">Cofactor biosynthesis; ubiquinone biosynthesis.</text>
</comment>
<comment type="similarity">
    <text evidence="1">Belongs to the methyltransferase superfamily. UbiG/COQ3 family.</text>
</comment>
<protein>
    <recommendedName>
        <fullName evidence="1">Ubiquinone biosynthesis O-methyltransferase</fullName>
    </recommendedName>
    <alternativeName>
        <fullName evidence="1">2-polyprenyl-6-hydroxyphenol methylase</fullName>
        <ecNumber evidence="1">2.1.1.222</ecNumber>
    </alternativeName>
    <alternativeName>
        <fullName evidence="1">3-demethylubiquinone 3-O-methyltransferase</fullName>
        <ecNumber evidence="1">2.1.1.64</ecNumber>
    </alternativeName>
</protein>
<name>UBIG_RICTY</name>
<sequence length="246" mass="28235">MSSINKKELKKFEKISHNWWNKDGEFGILHRINHIRIEYIIEKIKLHYNDISKLQILDVGCGGGLIAAPLASQGFNVTAIDALKSNIETATIYAQKNDLKINYLQTTIEELENDKLYDVVICLEVIEHVENVQQFILNLVQHIKPNGIAIISTINRTKKAYLFGIIVAEYILGWVPKNTHDYSKFLKPSEIYEILTDTNIEIKELKGLVFNLARNEWKLSNDIDVNYFMYLGKKINSLSNAINSIP</sequence>
<proteinExistence type="inferred from homology"/>